<keyword id="KW-0939">Gibberellin signaling pathway</keyword>
<keyword id="KW-0539">Nucleus</keyword>
<keyword id="KW-0597">Phosphoprotein</keyword>
<keyword id="KW-1185">Reference proteome</keyword>
<keyword id="KW-0678">Repressor</keyword>
<keyword id="KW-0804">Transcription</keyword>
<keyword id="KW-0805">Transcription regulation</keyword>
<keyword id="KW-0832">Ubl conjugation</keyword>
<comment type="function">
    <text evidence="3 5 11">Probable transcriptional regulator that acts as a repressor of the gibberellin (GA) signaling pathway. Probably acts by participating in large multiprotein complexes that repress transcription of GA-inducible genes. Upon GA application, it is degraded by the proteasome, allowing the GA signaling pathway. In contrast, its overexpression prevents the GA signaling pathway and induces a dwarf phenotype.</text>
</comment>
<comment type="subunit">
    <text evidence="6 8 10 11 12 13">May be a homodimer. Interacts directly with the GID2 component of the SCF(GID2) complex. Interacts with GID1 in a GA-dependent manner, probably leading to its interaction with GID2 and its subsequent degradation (PubMed:12649483, PubMed:14756772, PubMed:16193045). Interacts with D14 and GID1 in an strigolactone-dependent manner (PubMed:24131983). Interacts with HD16/EL1 (PubMed:20400938, PubMed:23789941).</text>
</comment>
<comment type="interaction">
    <interactant intactId="EBI-7913631">
        <id>Q7G7J6</id>
    </interactant>
    <interactant intactId="EBI-7913614">
        <id>Q852L0</id>
        <label>HD16</label>
    </interactant>
    <organismsDiffer>false</organismsDiffer>
    <experiments>2</experiments>
</comment>
<comment type="subcellular location">
    <subcellularLocation>
        <location evidence="3 5 13">Nucleus</location>
    </subcellularLocation>
</comment>
<comment type="tissue specificity">
    <text evidence="3">Expressed in nodes, internodes, leaf sheats of young seedlings and ears of adult plants. Weakly expressed in leaf blade and root.</text>
</comment>
<comment type="developmental stage">
    <text evidence="7">At the vegetative stage, it is expressed in rapidly elongating and dividing organs and tissues. At the influorescence or floral stage, it is expressed in the shoot meristems and stamen primordia.</text>
</comment>
<comment type="induction">
    <text evidence="3">Up-regulated following GA3 but not ABA application.</text>
</comment>
<comment type="domain">
    <text>The DELLA motif is required for its GA-induced degradation.</text>
</comment>
<comment type="PTM">
    <text evidence="6 8 9 11 12">Phosphorylated on Ser/Thr residues in the N-terminal part. Both phosphorylated and unphosphorylated forms are degraded upon GA treatment, suggesting that phosphorylation does not trigger ubiquitination (PubMed:12649483, PubMed:14756772, PubMed:15979983). Phosphorylated by HD16/EL1. Phosphorylation enhances its stability (PubMed:20400938, PubMed:23789941).</text>
</comment>
<comment type="PTM">
    <text evidence="6">Ubiquitinated. Upon GA application it is ubiquitinated by the SCF(GID2) complex, leading to its subsequent degradation.</text>
</comment>
<comment type="similarity">
    <text evidence="16">Belongs to the GRAS family. DELLA subfamily.</text>
</comment>
<comment type="sequence caution" evidence="16">
    <conflict type="erroneous gene model prediction">
        <sequence resource="EMBL-CDS" id="EEE59780"/>
    </conflict>
</comment>
<feature type="chain" id="PRO_0000132247" description="DELLA protein SLR1">
    <location>
        <begin position="1"/>
        <end position="625"/>
    </location>
</feature>
<feature type="domain" description="GRAS" evidence="1">
    <location>
        <begin position="232"/>
        <end position="621"/>
    </location>
</feature>
<feature type="region of interest" description="Disordered" evidence="2">
    <location>
        <begin position="1"/>
        <end position="34"/>
    </location>
</feature>
<feature type="region of interest" description="Disordered" evidence="2">
    <location>
        <begin position="167"/>
        <end position="209"/>
    </location>
</feature>
<feature type="region of interest" description="Leucine repeat I (LRI)" evidence="1">
    <location>
        <begin position="239"/>
        <end position="294"/>
    </location>
</feature>
<feature type="region of interest" description="Required for possible homodimerization">
    <location>
        <begin position="241"/>
        <end position="278"/>
    </location>
</feature>
<feature type="region of interest" description="VHIID" evidence="1">
    <location>
        <begin position="313"/>
        <end position="378"/>
    </location>
</feature>
<feature type="region of interest" description="Leucine repeat II (LRII)" evidence="1">
    <location>
        <begin position="392"/>
        <end position="431"/>
    </location>
</feature>
<feature type="region of interest" description="PFYRE" evidence="1">
    <location>
        <begin position="441"/>
        <end position="542"/>
    </location>
</feature>
<feature type="region of interest" description="SAW" evidence="1">
    <location>
        <begin position="545"/>
        <end position="621"/>
    </location>
</feature>
<feature type="short sequence motif" description="DELLA motif">
    <location>
        <begin position="39"/>
        <end position="43"/>
    </location>
</feature>
<feature type="short sequence motif" description="LxCxE motif" evidence="1">
    <location>
        <begin position="246"/>
        <end position="250"/>
    </location>
</feature>
<feature type="short sequence motif" description="VHIID" evidence="1">
    <location>
        <begin position="344"/>
        <end position="348"/>
    </location>
</feature>
<feature type="short sequence motif" description="LXXLL motif" evidence="1">
    <location>
        <begin position="449"/>
        <end position="453"/>
    </location>
</feature>
<feature type="compositionally biased region" description="Low complexity" evidence="2">
    <location>
        <begin position="189"/>
        <end position="198"/>
    </location>
</feature>
<feature type="mutagenesis site" description="Induces a dwarf phenotype." evidence="4">
    <location>
        <begin position="39"/>
        <end position="55"/>
    </location>
</feature>
<feature type="mutagenesis site" description="Decreases protein stability and enhances gibberellin signaling." evidence="11">
    <original>S</original>
    <variation>A</variation>
    <location>
        <position position="196"/>
    </location>
</feature>
<feature type="mutagenesis site" description="Decreases protein stability and enhances gibberellin signaling." evidence="11">
    <original>S</original>
    <variation>A</variation>
    <location>
        <position position="510"/>
    </location>
</feature>
<feature type="mutagenesis site" description="Increases protein stability and suppresses gibberellin signaling." evidence="11">
    <original>S</original>
    <variation>D</variation>
    <location>
        <position position="510"/>
    </location>
</feature>
<organism>
    <name type="scientific">Oryza sativa subsp. japonica</name>
    <name type="common">Rice</name>
    <dbReference type="NCBI Taxonomy" id="39947"/>
    <lineage>
        <taxon>Eukaryota</taxon>
        <taxon>Viridiplantae</taxon>
        <taxon>Streptophyta</taxon>
        <taxon>Embryophyta</taxon>
        <taxon>Tracheophyta</taxon>
        <taxon>Spermatophyta</taxon>
        <taxon>Magnoliopsida</taxon>
        <taxon>Liliopsida</taxon>
        <taxon>Poales</taxon>
        <taxon>Poaceae</taxon>
        <taxon>BOP clade</taxon>
        <taxon>Oryzoideae</taxon>
        <taxon>Oryzeae</taxon>
        <taxon>Oryzinae</taxon>
        <taxon>Oryza</taxon>
        <taxon>Oryza sativa</taxon>
    </lineage>
</organism>
<name>SLR1_ORYSJ</name>
<dbReference type="EMBL" id="AB030956">
    <property type="protein sequence ID" value="BAA90749.1"/>
    <property type="molecule type" value="mRNA"/>
</dbReference>
<dbReference type="EMBL" id="AB262980">
    <property type="protein sequence ID" value="BAE96289.1"/>
    <property type="molecule type" value="Genomic_DNA"/>
</dbReference>
<dbReference type="EMBL" id="AC087797">
    <property type="protein sequence ID" value="AAK50137.1"/>
    <property type="molecule type" value="Genomic_DNA"/>
</dbReference>
<dbReference type="EMBL" id="DP000009">
    <property type="protein sequence ID" value="ABF98475.1"/>
    <property type="molecule type" value="Genomic_DNA"/>
</dbReference>
<dbReference type="EMBL" id="AP008209">
    <property type="protein sequence ID" value="BAF12946.1"/>
    <property type="molecule type" value="Genomic_DNA"/>
</dbReference>
<dbReference type="EMBL" id="AP014959">
    <property type="protein sequence ID" value="BAS85987.1"/>
    <property type="molecule type" value="Genomic_DNA"/>
</dbReference>
<dbReference type="EMBL" id="CM000140">
    <property type="protein sequence ID" value="EEE59780.1"/>
    <property type="status" value="ALT_SEQ"/>
    <property type="molecule type" value="Genomic_DNA"/>
</dbReference>
<dbReference type="RefSeq" id="XP_015631543.1">
    <property type="nucleotide sequence ID" value="XM_015776057.1"/>
</dbReference>
<dbReference type="SMR" id="Q7G7J6"/>
<dbReference type="BioGRID" id="802897">
    <property type="interactions" value="3"/>
</dbReference>
<dbReference type="DIP" id="DIP-59774N"/>
<dbReference type="FunCoup" id="Q7G7J6">
    <property type="interactions" value="1389"/>
</dbReference>
<dbReference type="IntAct" id="Q7G7J6">
    <property type="interactions" value="2"/>
</dbReference>
<dbReference type="MINT" id="Q7G7J6"/>
<dbReference type="STRING" id="39947.Q7G7J6"/>
<dbReference type="PaxDb" id="39947-Q7G7J6"/>
<dbReference type="EnsemblPlants" id="Os03t0707600-01">
    <property type="protein sequence ID" value="Os03t0707600-01"/>
    <property type="gene ID" value="Os03g0707600"/>
</dbReference>
<dbReference type="Gramene" id="Os03t0707600-01">
    <property type="protein sequence ID" value="Os03t0707600-01"/>
    <property type="gene ID" value="Os03g0707600"/>
</dbReference>
<dbReference type="KEGG" id="dosa:Os03g0707600"/>
<dbReference type="eggNOG" id="ENOG502QPMG">
    <property type="taxonomic scope" value="Eukaryota"/>
</dbReference>
<dbReference type="HOGENOM" id="CLU_011924_4_0_1"/>
<dbReference type="InParanoid" id="Q7G7J6"/>
<dbReference type="OMA" id="ICNVVAY"/>
<dbReference type="OrthoDB" id="761920at2759"/>
<dbReference type="PlantReactome" id="R-OSA-5679411">
    <property type="pathway name" value="Gibberellin signaling"/>
</dbReference>
<dbReference type="PlantReactome" id="R-OSA-6787011">
    <property type="pathway name" value="Jasmonic acid signaling"/>
</dbReference>
<dbReference type="PlantReactome" id="R-OSA-9030908">
    <property type="pathway name" value="Underwater shoot and internode elongation"/>
</dbReference>
<dbReference type="Proteomes" id="UP000000763">
    <property type="component" value="Chromosome 3"/>
</dbReference>
<dbReference type="Proteomes" id="UP000007752">
    <property type="component" value="Chromosome 3"/>
</dbReference>
<dbReference type="Proteomes" id="UP000059680">
    <property type="component" value="Chromosome 3"/>
</dbReference>
<dbReference type="GO" id="GO:0005634">
    <property type="term" value="C:nucleus"/>
    <property type="evidence" value="ECO:0000314"/>
    <property type="project" value="CACAO"/>
</dbReference>
<dbReference type="GO" id="GO:0003700">
    <property type="term" value="F:DNA-binding transcription factor activity"/>
    <property type="evidence" value="ECO:0000318"/>
    <property type="project" value="GO_Central"/>
</dbReference>
<dbReference type="GO" id="GO:0043565">
    <property type="term" value="F:sequence-specific DNA binding"/>
    <property type="evidence" value="ECO:0000318"/>
    <property type="project" value="GO_Central"/>
</dbReference>
<dbReference type="GO" id="GO:0009740">
    <property type="term" value="P:gibberellic acid mediated signaling pathway"/>
    <property type="evidence" value="ECO:0007669"/>
    <property type="project" value="UniProtKB-KW"/>
</dbReference>
<dbReference type="GO" id="GO:0006355">
    <property type="term" value="P:regulation of DNA-templated transcription"/>
    <property type="evidence" value="ECO:0000318"/>
    <property type="project" value="GO_Central"/>
</dbReference>
<dbReference type="FunFam" id="1.10.10.1290:FF:000001">
    <property type="entry name" value="DELLA protein GAI"/>
    <property type="match status" value="1"/>
</dbReference>
<dbReference type="Gene3D" id="1.10.10.1290">
    <property type="entry name" value="Transcriptional regulator DELLA, N-terminal domain"/>
    <property type="match status" value="1"/>
</dbReference>
<dbReference type="InterPro" id="IPR038088">
    <property type="entry name" value="DELLA_N_sf"/>
</dbReference>
<dbReference type="InterPro" id="IPR021914">
    <property type="entry name" value="TF_DELLA_N"/>
</dbReference>
<dbReference type="InterPro" id="IPR005202">
    <property type="entry name" value="TF_GRAS"/>
</dbReference>
<dbReference type="PANTHER" id="PTHR31636">
    <property type="entry name" value="OSJNBA0084A10.13 PROTEIN-RELATED"/>
    <property type="match status" value="1"/>
</dbReference>
<dbReference type="Pfam" id="PF12041">
    <property type="entry name" value="DELLA"/>
    <property type="match status" value="1"/>
</dbReference>
<dbReference type="Pfam" id="PF03514">
    <property type="entry name" value="GRAS"/>
    <property type="match status" value="1"/>
</dbReference>
<dbReference type="SMART" id="SM01129">
    <property type="entry name" value="DELLA"/>
    <property type="match status" value="1"/>
</dbReference>
<dbReference type="PROSITE" id="PS50985">
    <property type="entry name" value="GRAS"/>
    <property type="match status" value="1"/>
</dbReference>
<evidence type="ECO:0000255" key="1">
    <source>
        <dbReference type="PROSITE-ProRule" id="PRU01191"/>
    </source>
</evidence>
<evidence type="ECO:0000256" key="2">
    <source>
        <dbReference type="SAM" id="MobiDB-lite"/>
    </source>
</evidence>
<evidence type="ECO:0000269" key="3">
    <source>
    </source>
</evidence>
<evidence type="ECO:0000269" key="4">
    <source>
    </source>
</evidence>
<evidence type="ECO:0000269" key="5">
    <source>
    </source>
</evidence>
<evidence type="ECO:0000269" key="6">
    <source>
    </source>
</evidence>
<evidence type="ECO:0000269" key="7">
    <source>
    </source>
</evidence>
<evidence type="ECO:0000269" key="8">
    <source>
    </source>
</evidence>
<evidence type="ECO:0000269" key="9">
    <source>
    </source>
</evidence>
<evidence type="ECO:0000269" key="10">
    <source>
    </source>
</evidence>
<evidence type="ECO:0000269" key="11">
    <source>
    </source>
</evidence>
<evidence type="ECO:0000269" key="12">
    <source>
    </source>
</evidence>
<evidence type="ECO:0000269" key="13">
    <source>
    </source>
</evidence>
<evidence type="ECO:0000303" key="14">
    <source>
    </source>
</evidence>
<evidence type="ECO:0000303" key="15">
    <source>
    </source>
</evidence>
<evidence type="ECO:0000305" key="16"/>
<evidence type="ECO:0000312" key="17">
    <source>
        <dbReference type="EMBL" id="AAK50137.1"/>
    </source>
</evidence>
<evidence type="ECO:0000312" key="18">
    <source>
        <dbReference type="EMBL" id="ABF98475.1"/>
    </source>
</evidence>
<evidence type="ECO:0000312" key="19">
    <source>
        <dbReference type="EMBL" id="BAF12946.1"/>
    </source>
</evidence>
<evidence type="ECO:0000312" key="20">
    <source>
        <dbReference type="EMBL" id="EEE59780.1"/>
    </source>
</evidence>
<gene>
    <name evidence="15" type="primary">SLR1</name>
    <name evidence="14" type="synonym">GAI</name>
    <name evidence="19" type="ordered locus">Os03g0707600</name>
    <name evidence="18" type="ordered locus">LOC_Os03g49990</name>
    <name evidence="20" type="ORF">OsJ_12286</name>
    <name evidence="17" type="ORF">OSJNBb0022E02.5</name>
</gene>
<reference key="1">
    <citation type="journal article" date="2000" name="Gene">
        <title>Rice gibberellin-insensitive gene homolog, OsGAI, encodes a nuclear-localized protein capable of gene activation at transcriptional level.</title>
        <authorList>
            <person name="Ogawa M."/>
            <person name="Kusano T."/>
            <person name="Katsumi M."/>
            <person name="Sano H."/>
        </authorList>
    </citation>
    <scope>NUCLEOTIDE SEQUENCE [MRNA]</scope>
    <scope>FUNCTION</scope>
    <scope>SUBCELLULAR LOCATION</scope>
    <scope>TISSUE SPECIFICITY</scope>
    <scope>INDUCTION</scope>
    <source>
        <tissue>Seedling</tissue>
    </source>
</reference>
<reference key="2">
    <citation type="journal article" date="2002" name="Plant Cell">
        <title>The gibberellin signaling pathway is regulated by the appearance and disappearance of SLENDER RICE1 in nuclei.</title>
        <authorList>
            <person name="Itoh H."/>
            <person name="Ueguchi-Tanaka M."/>
            <person name="Sato Y."/>
            <person name="Ashikari M."/>
            <person name="Matsuoka M."/>
        </authorList>
    </citation>
    <scope>NUCLEOTIDE SEQUENCE [GENOMIC DNA]</scope>
    <scope>FUNCTION</scope>
    <scope>SUBCELLULAR LOCATION</scope>
    <scope>POSSIBLE HOMODIMERIZATION</scope>
    <scope>DEGRADATION</scope>
</reference>
<reference key="3">
    <citation type="journal article" date="2005" name="Genome Res.">
        <title>Sequence, annotation, and analysis of synteny between rice chromosome 3 and diverged grass species.</title>
        <authorList>
            <consortium name="The rice chromosome 3 sequencing consortium"/>
            <person name="Buell C.R."/>
            <person name="Yuan Q."/>
            <person name="Ouyang S."/>
            <person name="Liu J."/>
            <person name="Zhu W."/>
            <person name="Wang A."/>
            <person name="Maiti R."/>
            <person name="Haas B."/>
            <person name="Wortman J."/>
            <person name="Pertea M."/>
            <person name="Jones K.M."/>
            <person name="Kim M."/>
            <person name="Overton L."/>
            <person name="Tsitrin T."/>
            <person name="Fadrosh D."/>
            <person name="Bera J."/>
            <person name="Weaver B."/>
            <person name="Jin S."/>
            <person name="Johri S."/>
            <person name="Reardon M."/>
            <person name="Webb K."/>
            <person name="Hill J."/>
            <person name="Moffat K."/>
            <person name="Tallon L."/>
            <person name="Van Aken S."/>
            <person name="Lewis M."/>
            <person name="Utterback T."/>
            <person name="Feldblyum T."/>
            <person name="Zismann V."/>
            <person name="Iobst S."/>
            <person name="Hsiao J."/>
            <person name="de Vazeille A.R."/>
            <person name="Salzberg S.L."/>
            <person name="White O."/>
            <person name="Fraser C.M."/>
            <person name="Yu Y."/>
            <person name="Kim H."/>
            <person name="Rambo T."/>
            <person name="Currie J."/>
            <person name="Collura K."/>
            <person name="Kernodle-Thompson S."/>
            <person name="Wei F."/>
            <person name="Kudrna K."/>
            <person name="Ammiraju J.S.S."/>
            <person name="Luo M."/>
            <person name="Goicoechea J.L."/>
            <person name="Wing R.A."/>
            <person name="Henry D."/>
            <person name="Oates R."/>
            <person name="Palmer M."/>
            <person name="Pries G."/>
            <person name="Saski C."/>
            <person name="Simmons J."/>
            <person name="Soderlund C."/>
            <person name="Nelson W."/>
            <person name="de la Bastide M."/>
            <person name="Spiegel L."/>
            <person name="Nascimento L."/>
            <person name="Huang E."/>
            <person name="Preston R."/>
            <person name="Zutavern T."/>
            <person name="Palmer L."/>
            <person name="O'Shaughnessy A."/>
            <person name="Dike S."/>
            <person name="McCombie W.R."/>
            <person name="Minx P."/>
            <person name="Cordum H."/>
            <person name="Wilson R."/>
            <person name="Jin W."/>
            <person name="Lee H.R."/>
            <person name="Jiang J."/>
            <person name="Jackson S."/>
        </authorList>
    </citation>
    <scope>NUCLEOTIDE SEQUENCE [LARGE SCALE GENOMIC DNA]</scope>
    <source>
        <strain>cv. Nipponbare</strain>
    </source>
</reference>
<reference key="4">
    <citation type="journal article" date="2005" name="Nature">
        <title>The map-based sequence of the rice genome.</title>
        <authorList>
            <consortium name="International rice genome sequencing project (IRGSP)"/>
        </authorList>
    </citation>
    <scope>NUCLEOTIDE SEQUENCE [LARGE SCALE GENOMIC DNA]</scope>
    <source>
        <strain>cv. Nipponbare</strain>
    </source>
</reference>
<reference key="5">
    <citation type="journal article" date="2008" name="Nucleic Acids Res.">
        <title>The rice annotation project database (RAP-DB): 2008 update.</title>
        <authorList>
            <consortium name="The rice annotation project (RAP)"/>
        </authorList>
    </citation>
    <scope>GENOME REANNOTATION</scope>
    <source>
        <strain>cv. Nipponbare</strain>
    </source>
</reference>
<reference key="6">
    <citation type="journal article" date="2013" name="Rice">
        <title>Improvement of the Oryza sativa Nipponbare reference genome using next generation sequence and optical map data.</title>
        <authorList>
            <person name="Kawahara Y."/>
            <person name="de la Bastide M."/>
            <person name="Hamilton J.P."/>
            <person name="Kanamori H."/>
            <person name="McCombie W.R."/>
            <person name="Ouyang S."/>
            <person name="Schwartz D.C."/>
            <person name="Tanaka T."/>
            <person name="Wu J."/>
            <person name="Zhou S."/>
            <person name="Childs K.L."/>
            <person name="Davidson R.M."/>
            <person name="Lin H."/>
            <person name="Quesada-Ocampo L."/>
            <person name="Vaillancourt B."/>
            <person name="Sakai H."/>
            <person name="Lee S.S."/>
            <person name="Kim J."/>
            <person name="Numa H."/>
            <person name="Itoh T."/>
            <person name="Buell C.R."/>
            <person name="Matsumoto T."/>
        </authorList>
    </citation>
    <scope>GENOME REANNOTATION</scope>
    <source>
        <strain>cv. Nipponbare</strain>
    </source>
</reference>
<reference key="7">
    <citation type="journal article" date="2005" name="PLoS Biol.">
        <title>The genomes of Oryza sativa: a history of duplications.</title>
        <authorList>
            <person name="Yu J."/>
            <person name="Wang J."/>
            <person name="Lin W."/>
            <person name="Li S."/>
            <person name="Li H."/>
            <person name="Zhou J."/>
            <person name="Ni P."/>
            <person name="Dong W."/>
            <person name="Hu S."/>
            <person name="Zeng C."/>
            <person name="Zhang J."/>
            <person name="Zhang Y."/>
            <person name="Li R."/>
            <person name="Xu Z."/>
            <person name="Li S."/>
            <person name="Li X."/>
            <person name="Zheng H."/>
            <person name="Cong L."/>
            <person name="Lin L."/>
            <person name="Yin J."/>
            <person name="Geng J."/>
            <person name="Li G."/>
            <person name="Shi J."/>
            <person name="Liu J."/>
            <person name="Lv H."/>
            <person name="Li J."/>
            <person name="Wang J."/>
            <person name="Deng Y."/>
            <person name="Ran L."/>
            <person name="Shi X."/>
            <person name="Wang X."/>
            <person name="Wu Q."/>
            <person name="Li C."/>
            <person name="Ren X."/>
            <person name="Wang J."/>
            <person name="Wang X."/>
            <person name="Li D."/>
            <person name="Liu D."/>
            <person name="Zhang X."/>
            <person name="Ji Z."/>
            <person name="Zhao W."/>
            <person name="Sun Y."/>
            <person name="Zhang Z."/>
            <person name="Bao J."/>
            <person name="Han Y."/>
            <person name="Dong L."/>
            <person name="Ji J."/>
            <person name="Chen P."/>
            <person name="Wu S."/>
            <person name="Liu J."/>
            <person name="Xiao Y."/>
            <person name="Bu D."/>
            <person name="Tan J."/>
            <person name="Yang L."/>
            <person name="Ye C."/>
            <person name="Zhang J."/>
            <person name="Xu J."/>
            <person name="Zhou Y."/>
            <person name="Yu Y."/>
            <person name="Zhang B."/>
            <person name="Zhuang S."/>
            <person name="Wei H."/>
            <person name="Liu B."/>
            <person name="Lei M."/>
            <person name="Yu H."/>
            <person name="Li Y."/>
            <person name="Xu H."/>
            <person name="Wei S."/>
            <person name="He X."/>
            <person name="Fang L."/>
            <person name="Zhang Z."/>
            <person name="Zhang Y."/>
            <person name="Huang X."/>
            <person name="Su Z."/>
            <person name="Tong W."/>
            <person name="Li J."/>
            <person name="Tong Z."/>
            <person name="Li S."/>
            <person name="Ye J."/>
            <person name="Wang L."/>
            <person name="Fang L."/>
            <person name="Lei T."/>
            <person name="Chen C.-S."/>
            <person name="Chen H.-C."/>
            <person name="Xu Z."/>
            <person name="Li H."/>
            <person name="Huang H."/>
            <person name="Zhang F."/>
            <person name="Xu H."/>
            <person name="Li N."/>
            <person name="Zhao C."/>
            <person name="Li S."/>
            <person name="Dong L."/>
            <person name="Huang Y."/>
            <person name="Li L."/>
            <person name="Xi Y."/>
            <person name="Qi Q."/>
            <person name="Li W."/>
            <person name="Zhang B."/>
            <person name="Hu W."/>
            <person name="Zhang Y."/>
            <person name="Tian X."/>
            <person name="Jiao Y."/>
            <person name="Liang X."/>
            <person name="Jin J."/>
            <person name="Gao L."/>
            <person name="Zheng W."/>
            <person name="Hao B."/>
            <person name="Liu S.-M."/>
            <person name="Wang W."/>
            <person name="Yuan L."/>
            <person name="Cao M."/>
            <person name="McDermott J."/>
            <person name="Samudrala R."/>
            <person name="Wang J."/>
            <person name="Wong G.K.-S."/>
            <person name="Yang H."/>
        </authorList>
    </citation>
    <scope>NUCLEOTIDE SEQUENCE [LARGE SCALE GENOMIC DNA]</scope>
    <source>
        <strain>cv. Nipponbare</strain>
    </source>
</reference>
<reference key="8">
    <citation type="journal article" date="2001" name="Plant Cell">
        <title>slender rice, a constitutive gibberellin response mutant, is caused by a null mutation of the SLR1 gene, an ortholog of the height-regulating gene GAI/RGA/RHT/D8.</title>
        <authorList>
            <person name="Ikeda A."/>
            <person name="Ueguchi-Tanaka M."/>
            <person name="Sonoda Y."/>
            <person name="Kitano H."/>
            <person name="Koshioka M."/>
            <person name="Futsuhara Y."/>
            <person name="Matsuoka M."/>
            <person name="Yamaguchi J."/>
        </authorList>
    </citation>
    <scope>MUTAGENESIS OF 39-ASP--ALA-55</scope>
</reference>
<reference key="9">
    <citation type="journal article" date="2003" name="Plant J.">
        <title>Where do gibberellin biosynthesis and gibberellin signaling occur in rice plants?</title>
        <authorList>
            <person name="Kaneko M."/>
            <person name="Itoh H."/>
            <person name="Inukai Y."/>
            <person name="Sakamoto T."/>
            <person name="Ueguchi-Tanaka M."/>
            <person name="Ashikari M."/>
            <person name="Matsuoka M."/>
        </authorList>
    </citation>
    <scope>DEVELOPMENTAL STAGE</scope>
</reference>
<reference key="10">
    <citation type="journal article" date="2003" name="Science">
        <title>Accumulation of phosphorylated repressor for gibberellin signaling in an F-box mutant.</title>
        <authorList>
            <person name="Sasaki A."/>
            <person name="Itoh H."/>
            <person name="Gomi K."/>
            <person name="Ueguchi-Tanaka M."/>
            <person name="Ishiyama K."/>
            <person name="Kobayashi M."/>
            <person name="Jeong D.-H."/>
            <person name="An G."/>
            <person name="Kitano H."/>
            <person name="Ashikari M."/>
            <person name="Matsuoka M."/>
        </authorList>
    </citation>
    <scope>PHOSPHORYLATION</scope>
    <scope>UBIQUITINATION</scope>
    <scope>DEGRADATION</scope>
    <scope>INTERACTION WITH GID2</scope>
</reference>
<reference key="11">
    <citation type="journal article" date="2004" name="Plant J.">
        <title>GID2, an F-box subunit of the SCF E3 complex, specifically interacts with phosphorylated SLR1 protein and regulates the gibberellin-dependent degradation of SLR1 in rice.</title>
        <authorList>
            <person name="Gomi K."/>
            <person name="Sasaki A."/>
            <person name="Itoh H."/>
            <person name="Ueguchi-Tanaka M."/>
            <person name="Ashikari M."/>
            <person name="Kitano H."/>
            <person name="Matsuoka M."/>
        </authorList>
    </citation>
    <scope>PHOSPHORYLATION</scope>
    <scope>INTERACTION WITH GID2</scope>
</reference>
<reference key="12">
    <citation type="journal article" date="2005" name="Nature">
        <title>GIBBERELLIN INSENSITIVE DWARF1 encodes a soluble receptor for gibberellin.</title>
        <authorList>
            <person name="Ueguchi-Tanaka M."/>
            <person name="Ashikari M."/>
            <person name="Nakajima M."/>
            <person name="Itoh H."/>
            <person name="Katoh E."/>
            <person name="Kobayashi M."/>
            <person name="Chow T.-Y."/>
            <person name="Hsing Y.-I."/>
            <person name="Kitano H."/>
            <person name="Yamaguchi I."/>
            <person name="Matsuoka M."/>
        </authorList>
    </citation>
    <scope>INTERACTION WITH GID1</scope>
</reference>
<reference key="13">
    <citation type="journal article" date="2005" name="Plant Cell Physiol.">
        <title>Dissection of the phosphorylation of rice DELLA protein, SLENDER RICE1.</title>
        <authorList>
            <person name="Itoh H."/>
            <person name="Sasaki A."/>
            <person name="Ueguchi-Tanaka M."/>
            <person name="Ishiyama K."/>
            <person name="Kobayashi M."/>
            <person name="Hasegawa Y."/>
            <person name="Minami E."/>
            <person name="Ashikari M."/>
            <person name="Matsuoka M."/>
        </authorList>
    </citation>
    <scope>PHOSPHORYLATION</scope>
</reference>
<reference key="14">
    <citation type="journal article" date="2010" name="EMBO J.">
        <title>Rice early flowering1, a CKI, phosphorylates DELLA protein SLR1 to negatively regulate gibberellin signalling.</title>
        <authorList>
            <person name="Dai C."/>
            <person name="Xue H.W."/>
        </authorList>
    </citation>
    <scope>FUNCTION</scope>
    <scope>INTERACTION WITH HD16/EL1</scope>
    <scope>PHOSPHORYLATION</scope>
    <scope>MUTAGENESIS OF SER-196 AND SER-510</scope>
</reference>
<reference key="15">
    <citation type="journal article" date="2013" name="Nat. Commun.">
        <title>Molecular mechanism of strigolactone perception by DWARF14.</title>
        <authorList>
            <person name="Nakamura H."/>
            <person name="Xue Y.L."/>
            <person name="Miyakawa T."/>
            <person name="Hou F."/>
            <person name="Qin H.M."/>
            <person name="Fukui K."/>
            <person name="Shi X."/>
            <person name="Ito E."/>
            <person name="Ito S."/>
            <person name="Park S.H."/>
            <person name="Miyauchi Y."/>
            <person name="Asano A."/>
            <person name="Totsuka N."/>
            <person name="Ueda T."/>
            <person name="Tanokura M."/>
            <person name="Asami T."/>
        </authorList>
    </citation>
    <scope>INTERACTION WITH D14 AND GID1</scope>
    <scope>SUBCELLULAR LOCATION</scope>
</reference>
<reference key="16">
    <citation type="journal article" date="2013" name="Plant J.">
        <title>Hd16, a gene for casein kinase I, is involved in the control of rice flowering time by modulating the day-length response.</title>
        <authorList>
            <person name="Hori K."/>
            <person name="Ogiso-Tanaka E."/>
            <person name="Matsubara K."/>
            <person name="Yamanouchi U."/>
            <person name="Ebana K."/>
            <person name="Yano M."/>
        </authorList>
    </citation>
    <scope>INTERACTION WITH HD16/EL1</scope>
    <scope>PHOSPHORYLATION</scope>
    <source>
        <strain>cv. Koshihikari</strain>
        <strain>cv. Nipponbare</strain>
    </source>
</reference>
<proteinExistence type="evidence at protein level"/>
<protein>
    <recommendedName>
        <fullName evidence="15">DELLA protein SLR1</fullName>
    </recommendedName>
    <alternativeName>
        <fullName evidence="14">Gibberellic acid-insensitive mutant protein</fullName>
    </alternativeName>
    <alternativeName>
        <fullName evidence="14">OsGAI</fullName>
    </alternativeName>
    <alternativeName>
        <fullName evidence="15">Protein SLENDER RICE1</fullName>
    </alternativeName>
</protein>
<accession>Q7G7J6</accession>
<accession>B9FB42</accession>
<accession>Q18ND8</accession>
<accession>Q9MB96</accession>
<sequence>MKREYQEAGGSSGGGSSADMGSCKDKVMAGAAGEEEDVDELLAALGYKVRSSDMADVAQKLEQLEMAMGMGGVSAPGAADDGFVSHLATDTVHYNPSDLSSWVESMLSELNAPLPPIPPAPPAARHASTSSTVTGGGGSGFFELPAAADSSSSTYALRPISLPVVATADPSAADSARDTKRMRTGGGSTSSSSSSSSSLGGGASRGSVVEAAPPATQGAAAANAPAVPVVVVDTQEAGIRLVHALLACAEAVQQENFAAAEALVKQIPTLAASQGGAMRKVAAYFGEALARRVYRFRPADSTLLDAAFADLLHAHFYESCPYLKFAHFTANQAILEAFAGCHRVHVVDFGIKQGMQWPALLQALALRPGGPPSFRLTGVGPPQPDETDALQQVGWKLAQFAHTIRVDFQYRGLVAATLADLEPFMLQPEGEADANEEPEVIAVNSVFELHRLLAQPGALEKVLGTVHAVRPRIVTVVEQEANHNSGSFLDRFTESLHYYSTMFDSLEGGSSGQAELSPPAAGGGGGTDQVMSEVYLGRQICNVVACEGAERTERHETLGQWRNRLGRAGFEPVHLGSNAYKQASTLLALFAGGDGYRVEEKEGCLTLGWHTRPLIATSAWRVAAA</sequence>